<proteinExistence type="inferred from homology"/>
<evidence type="ECO:0000255" key="1">
    <source>
        <dbReference type="HAMAP-Rule" id="MF_01364"/>
    </source>
</evidence>
<evidence type="ECO:0000305" key="2"/>
<comment type="function">
    <text evidence="1">Binds 16S rRNA, required for the assembly of 30S particles and may also be responsible for determining the conformation of the 16S rRNA at the A site.</text>
</comment>
<comment type="cofactor">
    <cofactor evidence="1">
        <name>Zn(2+)</name>
        <dbReference type="ChEBI" id="CHEBI:29105"/>
    </cofactor>
    <text evidence="1">Binds 1 zinc ion per subunit.</text>
</comment>
<comment type="subunit">
    <text evidence="1">Part of the 30S ribosomal subunit. Contacts proteins S3 and S10.</text>
</comment>
<comment type="similarity">
    <text evidence="1">Belongs to the universal ribosomal protein uS14 family. Zinc-binding uS14 subfamily.</text>
</comment>
<reference key="1">
    <citation type="submission" date="2008-07" db="EMBL/GenBank/DDBJ databases">
        <title>Complete sequence of Geobacter bemidjiensis BEM.</title>
        <authorList>
            <consortium name="US DOE Joint Genome Institute"/>
            <person name="Lucas S."/>
            <person name="Copeland A."/>
            <person name="Lapidus A."/>
            <person name="Glavina del Rio T."/>
            <person name="Dalin E."/>
            <person name="Tice H."/>
            <person name="Bruce D."/>
            <person name="Goodwin L."/>
            <person name="Pitluck S."/>
            <person name="Kiss H."/>
            <person name="Brettin T."/>
            <person name="Detter J.C."/>
            <person name="Han C."/>
            <person name="Kuske C.R."/>
            <person name="Schmutz J."/>
            <person name="Larimer F."/>
            <person name="Land M."/>
            <person name="Hauser L."/>
            <person name="Kyrpides N."/>
            <person name="Lykidis A."/>
            <person name="Lovley D."/>
            <person name="Richardson P."/>
        </authorList>
    </citation>
    <scope>NUCLEOTIDE SEQUENCE [LARGE SCALE GENOMIC DNA]</scope>
    <source>
        <strain>ATCC BAA-1014 / DSM 16622 / JCM 12645 / Bem</strain>
    </source>
</reference>
<feature type="chain" id="PRO_1000143904" description="Small ribosomal subunit protein uS14">
    <location>
        <begin position="1"/>
        <end position="61"/>
    </location>
</feature>
<feature type="binding site" evidence="1">
    <location>
        <position position="24"/>
    </location>
    <ligand>
        <name>Zn(2+)</name>
        <dbReference type="ChEBI" id="CHEBI:29105"/>
    </ligand>
</feature>
<feature type="binding site" evidence="1">
    <location>
        <position position="27"/>
    </location>
    <ligand>
        <name>Zn(2+)</name>
        <dbReference type="ChEBI" id="CHEBI:29105"/>
    </ligand>
</feature>
<feature type="binding site" evidence="1">
    <location>
        <position position="40"/>
    </location>
    <ligand>
        <name>Zn(2+)</name>
        <dbReference type="ChEBI" id="CHEBI:29105"/>
    </ligand>
</feature>
<feature type="binding site" evidence="1">
    <location>
        <position position="43"/>
    </location>
    <ligand>
        <name>Zn(2+)</name>
        <dbReference type="ChEBI" id="CHEBI:29105"/>
    </ligand>
</feature>
<gene>
    <name evidence="1" type="primary">rpsZ</name>
    <name evidence="1" type="synonym">rpsN</name>
    <name type="ordered locus">Gbem_0946</name>
</gene>
<dbReference type="EMBL" id="CP001124">
    <property type="protein sequence ID" value="ACH37967.1"/>
    <property type="molecule type" value="Genomic_DNA"/>
</dbReference>
<dbReference type="RefSeq" id="WP_012529379.1">
    <property type="nucleotide sequence ID" value="NC_011146.1"/>
</dbReference>
<dbReference type="SMR" id="B5EFR3"/>
<dbReference type="STRING" id="404380.Gbem_0946"/>
<dbReference type="KEGG" id="gbm:Gbem_0946"/>
<dbReference type="eggNOG" id="COG0199">
    <property type="taxonomic scope" value="Bacteria"/>
</dbReference>
<dbReference type="HOGENOM" id="CLU_139869_3_0_7"/>
<dbReference type="OrthoDB" id="9810484at2"/>
<dbReference type="Proteomes" id="UP000008825">
    <property type="component" value="Chromosome"/>
</dbReference>
<dbReference type="GO" id="GO:0005737">
    <property type="term" value="C:cytoplasm"/>
    <property type="evidence" value="ECO:0007669"/>
    <property type="project" value="UniProtKB-ARBA"/>
</dbReference>
<dbReference type="GO" id="GO:0015935">
    <property type="term" value="C:small ribosomal subunit"/>
    <property type="evidence" value="ECO:0007669"/>
    <property type="project" value="TreeGrafter"/>
</dbReference>
<dbReference type="GO" id="GO:0019843">
    <property type="term" value="F:rRNA binding"/>
    <property type="evidence" value="ECO:0007669"/>
    <property type="project" value="UniProtKB-UniRule"/>
</dbReference>
<dbReference type="GO" id="GO:0003735">
    <property type="term" value="F:structural constituent of ribosome"/>
    <property type="evidence" value="ECO:0007669"/>
    <property type="project" value="InterPro"/>
</dbReference>
<dbReference type="GO" id="GO:0008270">
    <property type="term" value="F:zinc ion binding"/>
    <property type="evidence" value="ECO:0007669"/>
    <property type="project" value="UniProtKB-UniRule"/>
</dbReference>
<dbReference type="GO" id="GO:0006412">
    <property type="term" value="P:translation"/>
    <property type="evidence" value="ECO:0007669"/>
    <property type="project" value="UniProtKB-UniRule"/>
</dbReference>
<dbReference type="FunFam" id="4.10.830.10:FF:000001">
    <property type="entry name" value="30S ribosomal protein S14 type Z"/>
    <property type="match status" value="1"/>
</dbReference>
<dbReference type="Gene3D" id="4.10.830.10">
    <property type="entry name" value="30s Ribosomal Protein S14, Chain N"/>
    <property type="match status" value="1"/>
</dbReference>
<dbReference type="HAMAP" id="MF_01364_B">
    <property type="entry name" value="Ribosomal_uS14_2_B"/>
    <property type="match status" value="1"/>
</dbReference>
<dbReference type="InterPro" id="IPR001209">
    <property type="entry name" value="Ribosomal_uS14"/>
</dbReference>
<dbReference type="InterPro" id="IPR023053">
    <property type="entry name" value="Ribosomal_uS14_bact"/>
</dbReference>
<dbReference type="InterPro" id="IPR018271">
    <property type="entry name" value="Ribosomal_uS14_CS"/>
</dbReference>
<dbReference type="InterPro" id="IPR043140">
    <property type="entry name" value="Ribosomal_uS14_sf"/>
</dbReference>
<dbReference type="NCBIfam" id="NF005974">
    <property type="entry name" value="PRK08061.1"/>
    <property type="match status" value="1"/>
</dbReference>
<dbReference type="PANTHER" id="PTHR19836">
    <property type="entry name" value="30S RIBOSOMAL PROTEIN S14"/>
    <property type="match status" value="1"/>
</dbReference>
<dbReference type="PANTHER" id="PTHR19836:SF19">
    <property type="entry name" value="SMALL RIBOSOMAL SUBUNIT PROTEIN US14M"/>
    <property type="match status" value="1"/>
</dbReference>
<dbReference type="Pfam" id="PF00253">
    <property type="entry name" value="Ribosomal_S14"/>
    <property type="match status" value="1"/>
</dbReference>
<dbReference type="SUPFAM" id="SSF57716">
    <property type="entry name" value="Glucocorticoid receptor-like (DNA-binding domain)"/>
    <property type="match status" value="1"/>
</dbReference>
<dbReference type="PROSITE" id="PS00527">
    <property type="entry name" value="RIBOSOMAL_S14"/>
    <property type="match status" value="1"/>
</dbReference>
<accession>B5EFR3</accession>
<organism>
    <name type="scientific">Citrifermentans bemidjiense (strain ATCC BAA-1014 / DSM 16622 / JCM 12645 / Bem)</name>
    <name type="common">Geobacter bemidjiensis</name>
    <dbReference type="NCBI Taxonomy" id="404380"/>
    <lineage>
        <taxon>Bacteria</taxon>
        <taxon>Pseudomonadati</taxon>
        <taxon>Thermodesulfobacteriota</taxon>
        <taxon>Desulfuromonadia</taxon>
        <taxon>Geobacterales</taxon>
        <taxon>Geobacteraceae</taxon>
        <taxon>Citrifermentans</taxon>
    </lineage>
</organism>
<name>RS14Z_CITBB</name>
<sequence>MAKTSMIIKAQRGNKFKVRERNRCPLCGRPRAYYRKFDMCRICLRKLSNLGQVPGVIKSSW</sequence>
<keyword id="KW-0479">Metal-binding</keyword>
<keyword id="KW-1185">Reference proteome</keyword>
<keyword id="KW-0687">Ribonucleoprotein</keyword>
<keyword id="KW-0689">Ribosomal protein</keyword>
<keyword id="KW-0694">RNA-binding</keyword>
<keyword id="KW-0699">rRNA-binding</keyword>
<keyword id="KW-0862">Zinc</keyword>
<protein>
    <recommendedName>
        <fullName evidence="1">Small ribosomal subunit protein uS14</fullName>
    </recommendedName>
    <alternativeName>
        <fullName evidence="2">30S ribosomal protein S14 type Z</fullName>
    </alternativeName>
</protein>